<reference key="1">
    <citation type="submission" date="2004-11" db="EMBL/GenBank/DDBJ databases">
        <authorList>
            <consortium name="The German cDNA consortium"/>
        </authorList>
    </citation>
    <scope>NUCLEOTIDE SEQUENCE [LARGE SCALE MRNA]</scope>
    <source>
        <tissue>Heart</tissue>
    </source>
</reference>
<protein>
    <recommendedName>
        <fullName>Lysosomal Pro-X carboxypeptidase</fullName>
        <ecNumber>3.4.16.2</ecNumber>
    </recommendedName>
    <alternativeName>
        <fullName>Proline carboxypeptidase</fullName>
    </alternativeName>
    <alternativeName>
        <fullName>Prolylcarboxypeptidase</fullName>
        <shortName>PRCP</shortName>
    </alternativeName>
</protein>
<keyword id="KW-0121">Carboxypeptidase</keyword>
<keyword id="KW-1015">Disulfide bond</keyword>
<keyword id="KW-0325">Glycoprotein</keyword>
<keyword id="KW-0378">Hydrolase</keyword>
<keyword id="KW-0458">Lysosome</keyword>
<keyword id="KW-0645">Protease</keyword>
<keyword id="KW-1185">Reference proteome</keyword>
<keyword id="KW-0732">Signal</keyword>
<keyword id="KW-0865">Zymogen</keyword>
<name>PCP_PONAB</name>
<dbReference type="EC" id="3.4.16.2"/>
<dbReference type="EMBL" id="CR858536">
    <property type="protein sequence ID" value="CAH90763.1"/>
    <property type="molecule type" value="mRNA"/>
</dbReference>
<dbReference type="RefSeq" id="NP_001125428.1">
    <property type="nucleotide sequence ID" value="NM_001131956.1"/>
</dbReference>
<dbReference type="SMR" id="Q5RBU7"/>
<dbReference type="FunCoup" id="Q5RBU7">
    <property type="interactions" value="1240"/>
</dbReference>
<dbReference type="STRING" id="9601.ENSPPYP00000004261"/>
<dbReference type="ESTHER" id="ponpy-q5rbu7">
    <property type="family name" value="Prolylcarboxypeptidase"/>
</dbReference>
<dbReference type="MEROPS" id="S28.001"/>
<dbReference type="GlyCosmos" id="Q5RBU7">
    <property type="glycosylation" value="6 sites, No reported glycans"/>
</dbReference>
<dbReference type="GeneID" id="100172335"/>
<dbReference type="KEGG" id="pon:100172335"/>
<dbReference type="CTD" id="5547"/>
<dbReference type="eggNOG" id="KOG2183">
    <property type="taxonomic scope" value="Eukaryota"/>
</dbReference>
<dbReference type="InParanoid" id="Q5RBU7"/>
<dbReference type="OrthoDB" id="2130629at2759"/>
<dbReference type="Proteomes" id="UP000001595">
    <property type="component" value="Unplaced"/>
</dbReference>
<dbReference type="GO" id="GO:0005764">
    <property type="term" value="C:lysosome"/>
    <property type="evidence" value="ECO:0007669"/>
    <property type="project" value="UniProtKB-SubCell"/>
</dbReference>
<dbReference type="GO" id="GO:0008239">
    <property type="term" value="F:dipeptidyl-peptidase activity"/>
    <property type="evidence" value="ECO:0007669"/>
    <property type="project" value="TreeGrafter"/>
</dbReference>
<dbReference type="GO" id="GO:0004185">
    <property type="term" value="F:serine-type carboxypeptidase activity"/>
    <property type="evidence" value="ECO:0007669"/>
    <property type="project" value="UniProtKB-EC"/>
</dbReference>
<dbReference type="GO" id="GO:0060055">
    <property type="term" value="P:angiogenesis involved in wound healing"/>
    <property type="evidence" value="ECO:0007669"/>
    <property type="project" value="TreeGrafter"/>
</dbReference>
<dbReference type="GO" id="GO:0003085">
    <property type="term" value="P:negative regulation of systemic arterial blood pressure"/>
    <property type="evidence" value="ECO:0007669"/>
    <property type="project" value="TreeGrafter"/>
</dbReference>
<dbReference type="GO" id="GO:0006508">
    <property type="term" value="P:proteolysis"/>
    <property type="evidence" value="ECO:0007669"/>
    <property type="project" value="UniProtKB-KW"/>
</dbReference>
<dbReference type="GO" id="GO:0043535">
    <property type="term" value="P:regulation of blood vessel endothelial cell migration"/>
    <property type="evidence" value="ECO:0007669"/>
    <property type="project" value="TreeGrafter"/>
</dbReference>
<dbReference type="FunFam" id="1.20.120.980:FF:000002">
    <property type="entry name" value="lysosomal Pro-X carboxypeptidase"/>
    <property type="match status" value="1"/>
</dbReference>
<dbReference type="Gene3D" id="3.40.50.1820">
    <property type="entry name" value="alpha/beta hydrolase"/>
    <property type="match status" value="1"/>
</dbReference>
<dbReference type="Gene3D" id="1.20.120.980">
    <property type="entry name" value="Serine carboxypeptidase S28, SKS domain"/>
    <property type="match status" value="1"/>
</dbReference>
<dbReference type="InterPro" id="IPR029058">
    <property type="entry name" value="AB_hydrolase_fold"/>
</dbReference>
<dbReference type="InterPro" id="IPR008758">
    <property type="entry name" value="Peptidase_S28"/>
</dbReference>
<dbReference type="InterPro" id="IPR042269">
    <property type="entry name" value="Ser_carbopepase_S28_SKS"/>
</dbReference>
<dbReference type="PANTHER" id="PTHR11010:SF38">
    <property type="entry name" value="LYSOSOMAL PRO-X CARBOXYPEPTIDASE"/>
    <property type="match status" value="1"/>
</dbReference>
<dbReference type="PANTHER" id="PTHR11010">
    <property type="entry name" value="PROTEASE S28 PRO-X CARBOXYPEPTIDASE-RELATED"/>
    <property type="match status" value="1"/>
</dbReference>
<dbReference type="Pfam" id="PF05577">
    <property type="entry name" value="Peptidase_S28"/>
    <property type="match status" value="1"/>
</dbReference>
<dbReference type="SUPFAM" id="SSF53474">
    <property type="entry name" value="alpha/beta-Hydrolases"/>
    <property type="match status" value="1"/>
</dbReference>
<gene>
    <name type="primary">PRCP</name>
</gene>
<evidence type="ECO:0000250" key="1"/>
<evidence type="ECO:0000255" key="2"/>
<evidence type="ECO:0000305" key="3"/>
<feature type="signal peptide" evidence="2">
    <location>
        <begin position="1"/>
        <end position="21"/>
    </location>
</feature>
<feature type="propeptide" id="PRO_0000027312" evidence="1">
    <location>
        <begin position="22"/>
        <end position="45"/>
    </location>
</feature>
<feature type="chain" id="PRO_0000027313" description="Lysosomal Pro-X carboxypeptidase">
    <location>
        <begin position="46"/>
        <end position="496"/>
    </location>
</feature>
<feature type="region of interest" description="SKS domain" evidence="1">
    <location>
        <begin position="194"/>
        <end position="334"/>
    </location>
</feature>
<feature type="active site" description="Charge relay system" evidence="2">
    <location>
        <position position="179"/>
    </location>
</feature>
<feature type="active site" description="Charge relay system" evidence="2">
    <location>
        <position position="430"/>
    </location>
</feature>
<feature type="active site" description="Charge relay system" evidence="2">
    <location>
        <position position="455"/>
    </location>
</feature>
<feature type="glycosylation site" description="N-linked (GlcNAc...) asparagine" evidence="2">
    <location>
        <position position="47"/>
    </location>
</feature>
<feature type="glycosylation site" description="N-linked (GlcNAc...) asparagine" evidence="2">
    <location>
        <position position="101"/>
    </location>
</feature>
<feature type="glycosylation site" description="N-linked (GlcNAc...) asparagine" evidence="2">
    <location>
        <position position="317"/>
    </location>
</feature>
<feature type="glycosylation site" description="N-linked (GlcNAc...) asparagine" evidence="2">
    <location>
        <position position="336"/>
    </location>
</feature>
<feature type="glycosylation site" description="N-linked (GlcNAc...) asparagine" evidence="2">
    <location>
        <position position="345"/>
    </location>
</feature>
<feature type="glycosylation site" description="N-linked (GlcNAc...) asparagine" evidence="2">
    <location>
        <position position="415"/>
    </location>
</feature>
<feature type="disulfide bond" evidence="1">
    <location>
        <begin position="215"/>
        <end position="372"/>
    </location>
</feature>
<feature type="disulfide bond" evidence="1">
    <location>
        <begin position="233"/>
        <end position="310"/>
    </location>
</feature>
<feature type="disulfide bond" evidence="1">
    <location>
        <begin position="264"/>
        <end position="343"/>
    </location>
</feature>
<feature type="disulfide bond" evidence="1">
    <location>
        <begin position="364"/>
        <end position="394"/>
    </location>
</feature>
<sequence>MGRRALLLLLLSFLAPWTTIALRPALRALGSLHLPTNPTSLPAVAKNYSVLYFQQKVDHFGFNTVKTFNQRYLVADKYWKKNGGSILFYTGNEGDIIWFCNNTGFMWDVAEELKAMLVFAEHRYYGESLPFGDNTFKDSRHLNFLTSEQALADFAELIKHLKRTIPGAENQPVIAIGGSYGGMLAAWFRMKYPHMVVGALAASAPIWQFEDLVPCGVFMKIVTTDFRKSGPHCSESIRRSWDAINRLSNTGSGLQWLTGALHLCSPLTSQDIQHLKDWISETWVNLAMVDYPYASNFLQPLPAWPIKVVCQYLKNPNVSDSLLLQNIFQALNVYYNYSGQVKCLNISETATSSLGTLGWSYQACTEVVMPFCTNGVDDMFEPHSWNLKELSDDCFQQWGVRPRPSWITTMYGGKNISSHTNIVFSNGELDPWSGGGVTKDITDTLVAVTISEGAHHLDLRTKNALDPTSVLLARSLEVRHMKNWIRDFYDSAGKQH</sequence>
<organism>
    <name type="scientific">Pongo abelii</name>
    <name type="common">Sumatran orangutan</name>
    <name type="synonym">Pongo pygmaeus abelii</name>
    <dbReference type="NCBI Taxonomy" id="9601"/>
    <lineage>
        <taxon>Eukaryota</taxon>
        <taxon>Metazoa</taxon>
        <taxon>Chordata</taxon>
        <taxon>Craniata</taxon>
        <taxon>Vertebrata</taxon>
        <taxon>Euteleostomi</taxon>
        <taxon>Mammalia</taxon>
        <taxon>Eutheria</taxon>
        <taxon>Euarchontoglires</taxon>
        <taxon>Primates</taxon>
        <taxon>Haplorrhini</taxon>
        <taxon>Catarrhini</taxon>
        <taxon>Hominidae</taxon>
        <taxon>Pongo</taxon>
    </lineage>
</organism>
<comment type="function">
    <text evidence="1">Cleaves C-terminal amino acids linked to proline in peptides such as angiotensin II, III and des-Arg9-bradykinin. This cleavage occurs at acidic pH, but enzymatic activity is retained with some substrates at neutral pH (By similarity).</text>
</comment>
<comment type="catalytic activity">
    <reaction>
        <text>Cleavage of a -Pro-|-Xaa bond to release a C-terminal amino acid.</text>
        <dbReference type="EC" id="3.4.16.2"/>
    </reaction>
</comment>
<comment type="subunit">
    <text evidence="1">Homodimer.</text>
</comment>
<comment type="subcellular location">
    <subcellularLocation>
        <location evidence="1">Lysosome</location>
    </subcellularLocation>
</comment>
<comment type="similarity">
    <text evidence="3">Belongs to the peptidase S28 family.</text>
</comment>
<accession>Q5RBU7</accession>
<proteinExistence type="evidence at transcript level"/>